<name>CLPX_GLOC7</name>
<evidence type="ECO:0000255" key="1">
    <source>
        <dbReference type="HAMAP-Rule" id="MF_00175"/>
    </source>
</evidence>
<evidence type="ECO:0000255" key="2">
    <source>
        <dbReference type="PROSITE-ProRule" id="PRU01250"/>
    </source>
</evidence>
<evidence type="ECO:0000256" key="3">
    <source>
        <dbReference type="SAM" id="MobiDB-lite"/>
    </source>
</evidence>
<keyword id="KW-0067">ATP-binding</keyword>
<keyword id="KW-0143">Chaperone</keyword>
<keyword id="KW-0479">Metal-binding</keyword>
<keyword id="KW-0547">Nucleotide-binding</keyword>
<keyword id="KW-1185">Reference proteome</keyword>
<keyword id="KW-0862">Zinc</keyword>
<reference key="1">
    <citation type="journal article" date="2011" name="MBio">
        <title>Novel metabolic attributes of the genus Cyanothece, comprising a group of unicellular nitrogen-fixing Cyanobacteria.</title>
        <authorList>
            <person name="Bandyopadhyay A."/>
            <person name="Elvitigala T."/>
            <person name="Welsh E."/>
            <person name="Stockel J."/>
            <person name="Liberton M."/>
            <person name="Min H."/>
            <person name="Sherman L.A."/>
            <person name="Pakrasi H.B."/>
        </authorList>
    </citation>
    <scope>NUCLEOTIDE SEQUENCE [LARGE SCALE GENOMIC DNA]</scope>
    <source>
        <strain>PCC 7424</strain>
    </source>
</reference>
<sequence length="447" mass="49674">MSKYDSHLKCSFCGKSQEQVRKLIAGPGVYICDECVELCNEILDEELMEAPTSPVASSVSSREDRPKRRSSRDRLSLGQIPKPREIKKYLDEYVIGQNEAKKVLSVAVYNHYKRLSDIQAKRTGTGATDDPVELQKSNILLMGPTGSGKTLLAQTLAKILDVPFAVADATTLTEAGYVGEDVENILLRLLQVADLDVEEAQRGIIYIDEIDKIARKSENPSITRDVSGEGVQQALLKMLEGTVANVPPQGGRKHPYQDCIQIDTSNILFICGGAFVGLDKIVEQRLGKKSMGFIRPAEGTSKEKWSADLLKQLEPDDLVKFGMIPEFVGRIPVMASLDPLDEDALIAILTQPRNALVKQYQKLLKMDNVQLEFKSEAVRAIAQEAYRRKTGARALRGIVEELMLEVMYELPSRKDVKRCLITREMVEKRSTADLLMHPSSIPTPESA</sequence>
<feature type="chain" id="PRO_1000189684" description="ATP-dependent Clp protease ATP-binding subunit ClpX">
    <location>
        <begin position="1"/>
        <end position="447"/>
    </location>
</feature>
<feature type="domain" description="ClpX-type ZB" evidence="2">
    <location>
        <begin position="1"/>
        <end position="51"/>
    </location>
</feature>
<feature type="region of interest" description="Disordered" evidence="3">
    <location>
        <begin position="50"/>
        <end position="77"/>
    </location>
</feature>
<feature type="compositionally biased region" description="Low complexity" evidence="3">
    <location>
        <begin position="50"/>
        <end position="60"/>
    </location>
</feature>
<feature type="binding site" evidence="2">
    <location>
        <position position="10"/>
    </location>
    <ligand>
        <name>Zn(2+)</name>
        <dbReference type="ChEBI" id="CHEBI:29105"/>
    </ligand>
</feature>
<feature type="binding site" evidence="2">
    <location>
        <position position="13"/>
    </location>
    <ligand>
        <name>Zn(2+)</name>
        <dbReference type="ChEBI" id="CHEBI:29105"/>
    </ligand>
</feature>
<feature type="binding site" evidence="2">
    <location>
        <position position="32"/>
    </location>
    <ligand>
        <name>Zn(2+)</name>
        <dbReference type="ChEBI" id="CHEBI:29105"/>
    </ligand>
</feature>
<feature type="binding site" evidence="2">
    <location>
        <position position="35"/>
    </location>
    <ligand>
        <name>Zn(2+)</name>
        <dbReference type="ChEBI" id="CHEBI:29105"/>
    </ligand>
</feature>
<feature type="binding site" evidence="1">
    <location>
        <begin position="144"/>
        <end position="151"/>
    </location>
    <ligand>
        <name>ATP</name>
        <dbReference type="ChEBI" id="CHEBI:30616"/>
    </ligand>
</feature>
<organism>
    <name type="scientific">Gloeothece citriformis (strain PCC 7424)</name>
    <name type="common">Cyanothece sp. (strain PCC 7424)</name>
    <dbReference type="NCBI Taxonomy" id="65393"/>
    <lineage>
        <taxon>Bacteria</taxon>
        <taxon>Bacillati</taxon>
        <taxon>Cyanobacteriota</taxon>
        <taxon>Cyanophyceae</taxon>
        <taxon>Oscillatoriophycideae</taxon>
        <taxon>Chroococcales</taxon>
        <taxon>Aphanothecaceae</taxon>
        <taxon>Gloeothece</taxon>
        <taxon>Gloeothece citriformis</taxon>
    </lineage>
</organism>
<protein>
    <recommendedName>
        <fullName evidence="1">ATP-dependent Clp protease ATP-binding subunit ClpX</fullName>
    </recommendedName>
</protein>
<gene>
    <name evidence="1" type="primary">clpX</name>
    <name type="ordered locus">PCC7424_3131</name>
</gene>
<dbReference type="EMBL" id="CP001291">
    <property type="protein sequence ID" value="ACK71533.1"/>
    <property type="molecule type" value="Genomic_DNA"/>
</dbReference>
<dbReference type="RefSeq" id="WP_015955130.1">
    <property type="nucleotide sequence ID" value="NC_011729.1"/>
</dbReference>
<dbReference type="SMR" id="B7KBH7"/>
<dbReference type="STRING" id="65393.PCC7424_3131"/>
<dbReference type="KEGG" id="cyc:PCC7424_3131"/>
<dbReference type="eggNOG" id="COG1219">
    <property type="taxonomic scope" value="Bacteria"/>
</dbReference>
<dbReference type="HOGENOM" id="CLU_014218_8_2_3"/>
<dbReference type="OrthoDB" id="9804062at2"/>
<dbReference type="Proteomes" id="UP000002384">
    <property type="component" value="Chromosome"/>
</dbReference>
<dbReference type="GO" id="GO:0009376">
    <property type="term" value="C:HslUV protease complex"/>
    <property type="evidence" value="ECO:0007669"/>
    <property type="project" value="TreeGrafter"/>
</dbReference>
<dbReference type="GO" id="GO:0005524">
    <property type="term" value="F:ATP binding"/>
    <property type="evidence" value="ECO:0007669"/>
    <property type="project" value="UniProtKB-UniRule"/>
</dbReference>
<dbReference type="GO" id="GO:0016887">
    <property type="term" value="F:ATP hydrolysis activity"/>
    <property type="evidence" value="ECO:0007669"/>
    <property type="project" value="InterPro"/>
</dbReference>
<dbReference type="GO" id="GO:0140662">
    <property type="term" value="F:ATP-dependent protein folding chaperone"/>
    <property type="evidence" value="ECO:0007669"/>
    <property type="project" value="InterPro"/>
</dbReference>
<dbReference type="GO" id="GO:0046983">
    <property type="term" value="F:protein dimerization activity"/>
    <property type="evidence" value="ECO:0007669"/>
    <property type="project" value="InterPro"/>
</dbReference>
<dbReference type="GO" id="GO:0051082">
    <property type="term" value="F:unfolded protein binding"/>
    <property type="evidence" value="ECO:0007669"/>
    <property type="project" value="UniProtKB-UniRule"/>
</dbReference>
<dbReference type="GO" id="GO:0008270">
    <property type="term" value="F:zinc ion binding"/>
    <property type="evidence" value="ECO:0007669"/>
    <property type="project" value="InterPro"/>
</dbReference>
<dbReference type="GO" id="GO:0051301">
    <property type="term" value="P:cell division"/>
    <property type="evidence" value="ECO:0007669"/>
    <property type="project" value="TreeGrafter"/>
</dbReference>
<dbReference type="GO" id="GO:0051603">
    <property type="term" value="P:proteolysis involved in protein catabolic process"/>
    <property type="evidence" value="ECO:0007669"/>
    <property type="project" value="TreeGrafter"/>
</dbReference>
<dbReference type="CDD" id="cd19497">
    <property type="entry name" value="RecA-like_ClpX"/>
    <property type="match status" value="1"/>
</dbReference>
<dbReference type="FunFam" id="1.10.8.60:FF:000002">
    <property type="entry name" value="ATP-dependent Clp protease ATP-binding subunit ClpX"/>
    <property type="match status" value="1"/>
</dbReference>
<dbReference type="FunFam" id="3.40.50.300:FF:000005">
    <property type="entry name" value="ATP-dependent Clp protease ATP-binding subunit ClpX"/>
    <property type="match status" value="1"/>
</dbReference>
<dbReference type="Gene3D" id="1.10.8.60">
    <property type="match status" value="1"/>
</dbReference>
<dbReference type="Gene3D" id="6.20.220.10">
    <property type="entry name" value="ClpX chaperone, C4-type zinc finger domain"/>
    <property type="match status" value="1"/>
</dbReference>
<dbReference type="Gene3D" id="3.40.50.300">
    <property type="entry name" value="P-loop containing nucleotide triphosphate hydrolases"/>
    <property type="match status" value="1"/>
</dbReference>
<dbReference type="HAMAP" id="MF_00175">
    <property type="entry name" value="ClpX"/>
    <property type="match status" value="1"/>
</dbReference>
<dbReference type="InterPro" id="IPR003593">
    <property type="entry name" value="AAA+_ATPase"/>
</dbReference>
<dbReference type="InterPro" id="IPR050052">
    <property type="entry name" value="ATP-dep_Clp_protease_ClpX"/>
</dbReference>
<dbReference type="InterPro" id="IPR003959">
    <property type="entry name" value="ATPase_AAA_core"/>
</dbReference>
<dbReference type="InterPro" id="IPR019489">
    <property type="entry name" value="Clp_ATPase_C"/>
</dbReference>
<dbReference type="InterPro" id="IPR004487">
    <property type="entry name" value="Clp_protease_ATP-bd_su_ClpX"/>
</dbReference>
<dbReference type="InterPro" id="IPR046425">
    <property type="entry name" value="ClpX_bact"/>
</dbReference>
<dbReference type="InterPro" id="IPR027417">
    <property type="entry name" value="P-loop_NTPase"/>
</dbReference>
<dbReference type="InterPro" id="IPR010603">
    <property type="entry name" value="Znf_CppX_C4"/>
</dbReference>
<dbReference type="InterPro" id="IPR038366">
    <property type="entry name" value="Znf_CppX_C4_sf"/>
</dbReference>
<dbReference type="NCBIfam" id="TIGR00382">
    <property type="entry name" value="clpX"/>
    <property type="match status" value="1"/>
</dbReference>
<dbReference type="NCBIfam" id="NF003745">
    <property type="entry name" value="PRK05342.1"/>
    <property type="match status" value="1"/>
</dbReference>
<dbReference type="PANTHER" id="PTHR48102:SF7">
    <property type="entry name" value="ATP-DEPENDENT CLP PROTEASE ATP-BINDING SUBUNIT CLPX-LIKE, MITOCHONDRIAL"/>
    <property type="match status" value="1"/>
</dbReference>
<dbReference type="PANTHER" id="PTHR48102">
    <property type="entry name" value="ATP-DEPENDENT CLP PROTEASE ATP-BINDING SUBUNIT CLPX-LIKE, MITOCHONDRIAL-RELATED"/>
    <property type="match status" value="1"/>
</dbReference>
<dbReference type="Pfam" id="PF07724">
    <property type="entry name" value="AAA_2"/>
    <property type="match status" value="1"/>
</dbReference>
<dbReference type="Pfam" id="PF10431">
    <property type="entry name" value="ClpB_D2-small"/>
    <property type="match status" value="1"/>
</dbReference>
<dbReference type="Pfam" id="PF06689">
    <property type="entry name" value="zf-C4_ClpX"/>
    <property type="match status" value="1"/>
</dbReference>
<dbReference type="SMART" id="SM00382">
    <property type="entry name" value="AAA"/>
    <property type="match status" value="1"/>
</dbReference>
<dbReference type="SMART" id="SM01086">
    <property type="entry name" value="ClpB_D2-small"/>
    <property type="match status" value="1"/>
</dbReference>
<dbReference type="SMART" id="SM00994">
    <property type="entry name" value="zf-C4_ClpX"/>
    <property type="match status" value="1"/>
</dbReference>
<dbReference type="SUPFAM" id="SSF57716">
    <property type="entry name" value="Glucocorticoid receptor-like (DNA-binding domain)"/>
    <property type="match status" value="1"/>
</dbReference>
<dbReference type="SUPFAM" id="SSF52540">
    <property type="entry name" value="P-loop containing nucleoside triphosphate hydrolases"/>
    <property type="match status" value="1"/>
</dbReference>
<dbReference type="PROSITE" id="PS51902">
    <property type="entry name" value="CLPX_ZB"/>
    <property type="match status" value="1"/>
</dbReference>
<proteinExistence type="inferred from homology"/>
<accession>B7KBH7</accession>
<comment type="function">
    <text evidence="1">ATP-dependent specificity component of the Clp protease. It directs the protease to specific substrates. Can perform chaperone functions in the absence of ClpP.</text>
</comment>
<comment type="subunit">
    <text evidence="1">Component of the ClpX-ClpP complex. Forms a hexameric ring that, in the presence of ATP, binds to fourteen ClpP subunits assembled into a disk-like structure with a central cavity, resembling the structure of eukaryotic proteasomes.</text>
</comment>
<comment type="similarity">
    <text evidence="1">Belongs to the ClpX chaperone family.</text>
</comment>